<evidence type="ECO:0000255" key="1">
    <source>
        <dbReference type="HAMAP-Rule" id="MF_01901"/>
    </source>
</evidence>
<protein>
    <recommendedName>
        <fullName evidence="1">Arginine exporter protein ArgO</fullName>
    </recommendedName>
</protein>
<dbReference type="EMBL" id="CP001113">
    <property type="protein sequence ID" value="ACF62246.1"/>
    <property type="molecule type" value="Genomic_DNA"/>
</dbReference>
<dbReference type="RefSeq" id="WP_000626867.1">
    <property type="nucleotide sequence ID" value="NC_011080.1"/>
</dbReference>
<dbReference type="KEGG" id="see:SNSL254_A3305"/>
<dbReference type="HOGENOM" id="CLU_087840_0_1_6"/>
<dbReference type="Proteomes" id="UP000008824">
    <property type="component" value="Chromosome"/>
</dbReference>
<dbReference type="GO" id="GO:0005886">
    <property type="term" value="C:plasma membrane"/>
    <property type="evidence" value="ECO:0007669"/>
    <property type="project" value="UniProtKB-SubCell"/>
</dbReference>
<dbReference type="GO" id="GO:0061459">
    <property type="term" value="F:L-arginine transmembrane transporter activity"/>
    <property type="evidence" value="ECO:0007669"/>
    <property type="project" value="UniProtKB-UniRule"/>
</dbReference>
<dbReference type="HAMAP" id="MF_01901">
    <property type="entry name" value="ArgO"/>
    <property type="match status" value="1"/>
</dbReference>
<dbReference type="InterPro" id="IPR023445">
    <property type="entry name" value="Arg_export_ArgO_enterobac"/>
</dbReference>
<dbReference type="InterPro" id="IPR001123">
    <property type="entry name" value="LeuE-type"/>
</dbReference>
<dbReference type="InterPro" id="IPR004777">
    <property type="entry name" value="Lys/arg_exporter"/>
</dbReference>
<dbReference type="NCBIfam" id="TIGR00948">
    <property type="entry name" value="2a75"/>
    <property type="match status" value="1"/>
</dbReference>
<dbReference type="NCBIfam" id="NF006801">
    <property type="entry name" value="PRK09304.1"/>
    <property type="match status" value="1"/>
</dbReference>
<dbReference type="PANTHER" id="PTHR30086">
    <property type="entry name" value="ARGININE EXPORTER PROTEIN ARGO"/>
    <property type="match status" value="1"/>
</dbReference>
<dbReference type="PANTHER" id="PTHR30086:SF20">
    <property type="entry name" value="ARGININE EXPORTER PROTEIN ARGO-RELATED"/>
    <property type="match status" value="1"/>
</dbReference>
<dbReference type="Pfam" id="PF01810">
    <property type="entry name" value="LysE"/>
    <property type="match status" value="1"/>
</dbReference>
<sequence length="211" mass="23248">MISYYFQGFALGAAMILPLGPQNAFVMNQGIRRQYHLMIALLCALSDLVLISAGIFGGSALLMQSPWLLALVTWGGVAFLLWYGFGALKTAMSSNLELASAEVMKRGRWKIIATMLAVTWLNPHVYLDTFVVLGSLGGQLAMEPKRWFALGTISASFLWFFGLALLAAWLAPRLRTAKAQRIINILVGVVMWLIAFQLAREGVAHMHALFN</sequence>
<gene>
    <name evidence="1" type="primary">argO</name>
    <name type="ordered locus">SNSL254_A3305</name>
</gene>
<name>ARGO_SALNS</name>
<keyword id="KW-0029">Amino-acid transport</keyword>
<keyword id="KW-0997">Cell inner membrane</keyword>
<keyword id="KW-1003">Cell membrane</keyword>
<keyword id="KW-0472">Membrane</keyword>
<keyword id="KW-0812">Transmembrane</keyword>
<keyword id="KW-1133">Transmembrane helix</keyword>
<keyword id="KW-0813">Transport</keyword>
<organism>
    <name type="scientific">Salmonella newport (strain SL254)</name>
    <dbReference type="NCBI Taxonomy" id="423368"/>
    <lineage>
        <taxon>Bacteria</taxon>
        <taxon>Pseudomonadati</taxon>
        <taxon>Pseudomonadota</taxon>
        <taxon>Gammaproteobacteria</taxon>
        <taxon>Enterobacterales</taxon>
        <taxon>Enterobacteriaceae</taxon>
        <taxon>Salmonella</taxon>
    </lineage>
</organism>
<feature type="chain" id="PRO_1000188722" description="Arginine exporter protein ArgO">
    <location>
        <begin position="1"/>
        <end position="211"/>
    </location>
</feature>
<feature type="transmembrane region" description="Helical" evidence="1">
    <location>
        <begin position="1"/>
        <end position="21"/>
    </location>
</feature>
<feature type="transmembrane region" description="Helical" evidence="1">
    <location>
        <begin position="37"/>
        <end position="57"/>
    </location>
</feature>
<feature type="transmembrane region" description="Helical" evidence="1">
    <location>
        <begin position="68"/>
        <end position="88"/>
    </location>
</feature>
<feature type="transmembrane region" description="Helical" evidence="1">
    <location>
        <begin position="111"/>
        <end position="131"/>
    </location>
</feature>
<feature type="transmembrane region" description="Helical" evidence="1">
    <location>
        <begin position="147"/>
        <end position="167"/>
    </location>
</feature>
<feature type="transmembrane region" description="Helical" evidence="1">
    <location>
        <begin position="179"/>
        <end position="199"/>
    </location>
</feature>
<reference key="1">
    <citation type="journal article" date="2011" name="J. Bacteriol.">
        <title>Comparative genomics of 28 Salmonella enterica isolates: evidence for CRISPR-mediated adaptive sublineage evolution.</title>
        <authorList>
            <person name="Fricke W.F."/>
            <person name="Mammel M.K."/>
            <person name="McDermott P.F."/>
            <person name="Tartera C."/>
            <person name="White D.G."/>
            <person name="Leclerc J.E."/>
            <person name="Ravel J."/>
            <person name="Cebula T.A."/>
        </authorList>
    </citation>
    <scope>NUCLEOTIDE SEQUENCE [LARGE SCALE GENOMIC DNA]</scope>
    <source>
        <strain>SL254</strain>
    </source>
</reference>
<accession>B4T5G7</accession>
<comment type="function">
    <text evidence="1">Involved in the export of arginine. Important to control the intracellular level of arginine and the correct balance between arginine and lysine.</text>
</comment>
<comment type="catalytic activity">
    <reaction evidence="1">
        <text>L-arginine(in) = L-arginine(out)</text>
        <dbReference type="Rhea" id="RHEA:32143"/>
        <dbReference type="ChEBI" id="CHEBI:32682"/>
    </reaction>
    <physiologicalReaction direction="left-to-right" evidence="1">
        <dbReference type="Rhea" id="RHEA:32144"/>
    </physiologicalReaction>
</comment>
<comment type="subcellular location">
    <subcellularLocation>
        <location evidence="1">Cell inner membrane</location>
        <topology evidence="1">Multi-pass membrane protein</topology>
    </subcellularLocation>
</comment>
<comment type="similarity">
    <text evidence="1">Belongs to the LysE/ArgO transporter (TC 2.A.75) family.</text>
</comment>
<proteinExistence type="inferred from homology"/>